<proteinExistence type="inferred from homology"/>
<name>PLSY2_LACJO</name>
<reference key="1">
    <citation type="journal article" date="2004" name="Proc. Natl. Acad. Sci. U.S.A.">
        <title>The genome sequence of the probiotic intestinal bacterium Lactobacillus johnsonii NCC 533.</title>
        <authorList>
            <person name="Pridmore R.D."/>
            <person name="Berger B."/>
            <person name="Desiere F."/>
            <person name="Vilanova D."/>
            <person name="Barretto C."/>
            <person name="Pittet A.-C."/>
            <person name="Zwahlen M.-C."/>
            <person name="Rouvet M."/>
            <person name="Altermann E."/>
            <person name="Barrangou R."/>
            <person name="Mollet B."/>
            <person name="Mercenier A."/>
            <person name="Klaenhammer T."/>
            <person name="Arigoni F."/>
            <person name="Schell M.A."/>
        </authorList>
    </citation>
    <scope>NUCLEOTIDE SEQUENCE [LARGE SCALE GENOMIC DNA]</scope>
    <source>
        <strain>CNCM I-1225 / La1 / NCC 533</strain>
    </source>
</reference>
<gene>
    <name evidence="1" type="primary">plsY2</name>
    <name type="ordered locus">LJ_1169</name>
</gene>
<organism>
    <name type="scientific">Lactobacillus johnsonii (strain CNCM I-12250 / La1 / NCC 533)</name>
    <dbReference type="NCBI Taxonomy" id="257314"/>
    <lineage>
        <taxon>Bacteria</taxon>
        <taxon>Bacillati</taxon>
        <taxon>Bacillota</taxon>
        <taxon>Bacilli</taxon>
        <taxon>Lactobacillales</taxon>
        <taxon>Lactobacillaceae</taxon>
        <taxon>Lactobacillus</taxon>
    </lineage>
</organism>
<comment type="function">
    <text evidence="1">Catalyzes the transfer of an acyl group from acyl-phosphate (acyl-PO(4)) to glycerol-3-phosphate (G3P) to form lysophosphatidic acid (LPA). This enzyme utilizes acyl-phosphate as fatty acyl donor, but not acyl-CoA or acyl-ACP.</text>
</comment>
<comment type="catalytic activity">
    <reaction evidence="1">
        <text>an acyl phosphate + sn-glycerol 3-phosphate = a 1-acyl-sn-glycero-3-phosphate + phosphate</text>
        <dbReference type="Rhea" id="RHEA:34075"/>
        <dbReference type="ChEBI" id="CHEBI:43474"/>
        <dbReference type="ChEBI" id="CHEBI:57597"/>
        <dbReference type="ChEBI" id="CHEBI:57970"/>
        <dbReference type="ChEBI" id="CHEBI:59918"/>
        <dbReference type="EC" id="2.3.1.275"/>
    </reaction>
</comment>
<comment type="pathway">
    <text evidence="1">Lipid metabolism; phospholipid metabolism.</text>
</comment>
<comment type="subunit">
    <text evidence="1">Probably interacts with PlsX.</text>
</comment>
<comment type="subcellular location">
    <subcellularLocation>
        <location evidence="1">Cell membrane</location>
        <topology evidence="1">Multi-pass membrane protein</topology>
    </subcellularLocation>
</comment>
<comment type="similarity">
    <text evidence="1">Belongs to the PlsY family.</text>
</comment>
<feature type="chain" id="PRO_0000188387" description="Glycerol-3-phosphate acyltransferase 2">
    <location>
        <begin position="1"/>
        <end position="218"/>
    </location>
</feature>
<feature type="transmembrane region" description="Helical" evidence="1">
    <location>
        <begin position="6"/>
        <end position="26"/>
    </location>
</feature>
<feature type="transmembrane region" description="Helical" evidence="1">
    <location>
        <begin position="50"/>
        <end position="70"/>
    </location>
</feature>
<feature type="transmembrane region" description="Helical" evidence="1">
    <location>
        <begin position="85"/>
        <end position="105"/>
    </location>
</feature>
<feature type="transmembrane region" description="Helical" evidence="1">
    <location>
        <begin position="115"/>
        <end position="135"/>
    </location>
</feature>
<feature type="transmembrane region" description="Helical" evidence="1">
    <location>
        <begin position="159"/>
        <end position="179"/>
    </location>
</feature>
<dbReference type="EC" id="2.3.1.275" evidence="1"/>
<dbReference type="EMBL" id="AE017198">
    <property type="protein sequence ID" value="AAS08991.1"/>
    <property type="molecule type" value="Genomic_DNA"/>
</dbReference>
<dbReference type="SMR" id="P60928"/>
<dbReference type="KEGG" id="ljo:LJ_1169"/>
<dbReference type="eggNOG" id="COG0344">
    <property type="taxonomic scope" value="Bacteria"/>
</dbReference>
<dbReference type="HOGENOM" id="CLU_081254_4_0_9"/>
<dbReference type="UniPathway" id="UPA00085"/>
<dbReference type="Proteomes" id="UP000000581">
    <property type="component" value="Chromosome"/>
</dbReference>
<dbReference type="GO" id="GO:0005886">
    <property type="term" value="C:plasma membrane"/>
    <property type="evidence" value="ECO:0007669"/>
    <property type="project" value="UniProtKB-SubCell"/>
</dbReference>
<dbReference type="GO" id="GO:0043772">
    <property type="term" value="F:acyl-phosphate glycerol-3-phosphate acyltransferase activity"/>
    <property type="evidence" value="ECO:0007669"/>
    <property type="project" value="UniProtKB-UniRule"/>
</dbReference>
<dbReference type="GO" id="GO:0008654">
    <property type="term" value="P:phospholipid biosynthetic process"/>
    <property type="evidence" value="ECO:0007669"/>
    <property type="project" value="UniProtKB-UniRule"/>
</dbReference>
<dbReference type="HAMAP" id="MF_01043">
    <property type="entry name" value="PlsY"/>
    <property type="match status" value="1"/>
</dbReference>
<dbReference type="InterPro" id="IPR003811">
    <property type="entry name" value="G3P_acylTferase_PlsY"/>
</dbReference>
<dbReference type="NCBIfam" id="TIGR00023">
    <property type="entry name" value="glycerol-3-phosphate 1-O-acyltransferase PlsY"/>
    <property type="match status" value="1"/>
</dbReference>
<dbReference type="PANTHER" id="PTHR30309:SF0">
    <property type="entry name" value="GLYCEROL-3-PHOSPHATE ACYLTRANSFERASE-RELATED"/>
    <property type="match status" value="1"/>
</dbReference>
<dbReference type="PANTHER" id="PTHR30309">
    <property type="entry name" value="INNER MEMBRANE PROTEIN YGIH"/>
    <property type="match status" value="1"/>
</dbReference>
<dbReference type="Pfam" id="PF02660">
    <property type="entry name" value="G3P_acyltransf"/>
    <property type="match status" value="1"/>
</dbReference>
<dbReference type="SMART" id="SM01207">
    <property type="entry name" value="G3P_acyltransf"/>
    <property type="match status" value="1"/>
</dbReference>
<protein>
    <recommendedName>
        <fullName evidence="1">Glycerol-3-phosphate acyltransferase 2</fullName>
    </recommendedName>
    <alternativeName>
        <fullName evidence="1">Acyl-PO4 G3P acyltransferase 2</fullName>
    </alternativeName>
    <alternativeName>
        <fullName evidence="1">Acyl-phosphate--glycerol-3-phosphate acyltransferase 2</fullName>
    </alternativeName>
    <alternativeName>
        <fullName evidence="1">G3P acyltransferase 2</fullName>
        <shortName evidence="1">GPAT 2</shortName>
        <ecNumber evidence="1">2.3.1.275</ecNumber>
    </alternativeName>
    <alternativeName>
        <fullName evidence="1">Lysophosphatidic acid synthase 2</fullName>
        <shortName evidence="1">LPA synthase 2</shortName>
    </alternativeName>
</protein>
<keyword id="KW-1003">Cell membrane</keyword>
<keyword id="KW-0444">Lipid biosynthesis</keyword>
<keyword id="KW-0443">Lipid metabolism</keyword>
<keyword id="KW-0472">Membrane</keyword>
<keyword id="KW-0594">Phospholipid biosynthesis</keyword>
<keyword id="KW-1208">Phospholipid metabolism</keyword>
<keyword id="KW-0808">Transferase</keyword>
<keyword id="KW-0812">Transmembrane</keyword>
<keyword id="KW-1133">Transmembrane helix</keyword>
<sequence length="218" mass="24246">MSTLNYLLIFILAYLIGSFPTGVLVGKIFFHEDIRNFGSGNIGTTNSFRVMGPVAGSAVLVIDVLKGTLATDLPLIFHLKGPKYLLLIAGACAILGHTFSIFLKFKGGKAVATSAGVFLGYNLKFFGLCALVFLPMLFITSYVSLSSLVSIVIIFICSFWFHDIFLTIITGIMMILLFVRHRSNIKRLINHEENIVPFGLWYWYKKSHGLLKKNAKNK</sequence>
<evidence type="ECO:0000255" key="1">
    <source>
        <dbReference type="HAMAP-Rule" id="MF_01043"/>
    </source>
</evidence>
<accession>P60928</accession>